<sequence>MSNIEERVKKIIVEQLGVDEAEVKNEASFVDDLGADSLDTVELVMALEEEFDTEIPDEEAEKITTVQAAIDYVNSAQ</sequence>
<organism>
    <name type="scientific">Vibrio campbellii (strain ATCC BAA-1116)</name>
    <dbReference type="NCBI Taxonomy" id="2902295"/>
    <lineage>
        <taxon>Bacteria</taxon>
        <taxon>Pseudomonadati</taxon>
        <taxon>Pseudomonadota</taxon>
        <taxon>Gammaproteobacteria</taxon>
        <taxon>Vibrionales</taxon>
        <taxon>Vibrionaceae</taxon>
        <taxon>Vibrio</taxon>
    </lineage>
</organism>
<protein>
    <recommendedName>
        <fullName evidence="1">Acyl carrier protein</fullName>
        <shortName evidence="1">ACP</shortName>
    </recommendedName>
</protein>
<comment type="function">
    <text evidence="1">Carrier of the growing fatty acid chain in fatty acid biosynthesis.</text>
</comment>
<comment type="pathway">
    <text evidence="1">Lipid metabolism; fatty acid biosynthesis.</text>
</comment>
<comment type="subcellular location">
    <subcellularLocation>
        <location evidence="1">Cytoplasm</location>
    </subcellularLocation>
</comment>
<comment type="PTM">
    <text evidence="1">4'-phosphopantetheine is transferred from CoA to a specific serine of apo-ACP by AcpS. This modification is essential for activity because fatty acids are bound in thioester linkage to the sulfhydryl of the prosthetic group.</text>
</comment>
<comment type="similarity">
    <text evidence="1">Belongs to the acyl carrier protein (ACP) family.</text>
</comment>
<keyword id="KW-0963">Cytoplasm</keyword>
<keyword id="KW-0275">Fatty acid biosynthesis</keyword>
<keyword id="KW-0276">Fatty acid metabolism</keyword>
<keyword id="KW-0444">Lipid biosynthesis</keyword>
<keyword id="KW-0443">Lipid metabolism</keyword>
<keyword id="KW-0596">Phosphopantetheine</keyword>
<keyword id="KW-0597">Phosphoprotein</keyword>
<evidence type="ECO:0000255" key="1">
    <source>
        <dbReference type="HAMAP-Rule" id="MF_01217"/>
    </source>
</evidence>
<evidence type="ECO:0000255" key="2">
    <source>
        <dbReference type="PROSITE-ProRule" id="PRU00258"/>
    </source>
</evidence>
<accession>A7MZU3</accession>
<proteinExistence type="inferred from homology"/>
<feature type="chain" id="PRO_1000066716" description="Acyl carrier protein">
    <location>
        <begin position="1"/>
        <end position="77"/>
    </location>
</feature>
<feature type="domain" description="Carrier" evidence="2">
    <location>
        <begin position="2"/>
        <end position="77"/>
    </location>
</feature>
<feature type="modified residue" description="O-(pantetheine 4'-phosphoryl)serine" evidence="2">
    <location>
        <position position="37"/>
    </location>
</feature>
<dbReference type="EMBL" id="CP000789">
    <property type="protein sequence ID" value="ABU71860.1"/>
    <property type="molecule type" value="Genomic_DNA"/>
</dbReference>
<dbReference type="RefSeq" id="WP_004406112.1">
    <property type="nucleotide sequence ID" value="NC_022269.1"/>
</dbReference>
<dbReference type="SMR" id="A7MZU3"/>
<dbReference type="GeneID" id="97540578"/>
<dbReference type="KEGG" id="vha:VIBHAR_02907"/>
<dbReference type="PATRIC" id="fig|338187.25.peg.3280"/>
<dbReference type="UniPathway" id="UPA00094"/>
<dbReference type="Proteomes" id="UP000008152">
    <property type="component" value="Chromosome I"/>
</dbReference>
<dbReference type="GO" id="GO:0005829">
    <property type="term" value="C:cytosol"/>
    <property type="evidence" value="ECO:0007669"/>
    <property type="project" value="TreeGrafter"/>
</dbReference>
<dbReference type="GO" id="GO:0016020">
    <property type="term" value="C:membrane"/>
    <property type="evidence" value="ECO:0007669"/>
    <property type="project" value="GOC"/>
</dbReference>
<dbReference type="GO" id="GO:0000035">
    <property type="term" value="F:acyl binding"/>
    <property type="evidence" value="ECO:0007669"/>
    <property type="project" value="TreeGrafter"/>
</dbReference>
<dbReference type="GO" id="GO:0000036">
    <property type="term" value="F:acyl carrier activity"/>
    <property type="evidence" value="ECO:0007669"/>
    <property type="project" value="UniProtKB-UniRule"/>
</dbReference>
<dbReference type="GO" id="GO:0009245">
    <property type="term" value="P:lipid A biosynthetic process"/>
    <property type="evidence" value="ECO:0007669"/>
    <property type="project" value="TreeGrafter"/>
</dbReference>
<dbReference type="FunFam" id="1.10.1200.10:FF:000001">
    <property type="entry name" value="Acyl carrier protein"/>
    <property type="match status" value="1"/>
</dbReference>
<dbReference type="Gene3D" id="1.10.1200.10">
    <property type="entry name" value="ACP-like"/>
    <property type="match status" value="1"/>
</dbReference>
<dbReference type="HAMAP" id="MF_01217">
    <property type="entry name" value="Acyl_carrier"/>
    <property type="match status" value="1"/>
</dbReference>
<dbReference type="InterPro" id="IPR003231">
    <property type="entry name" value="ACP"/>
</dbReference>
<dbReference type="InterPro" id="IPR036736">
    <property type="entry name" value="ACP-like_sf"/>
</dbReference>
<dbReference type="InterPro" id="IPR009081">
    <property type="entry name" value="PP-bd_ACP"/>
</dbReference>
<dbReference type="InterPro" id="IPR006162">
    <property type="entry name" value="Ppantetheine_attach_site"/>
</dbReference>
<dbReference type="NCBIfam" id="TIGR00517">
    <property type="entry name" value="acyl_carrier"/>
    <property type="match status" value="1"/>
</dbReference>
<dbReference type="NCBIfam" id="NF002148">
    <property type="entry name" value="PRK00982.1-2"/>
    <property type="match status" value="1"/>
</dbReference>
<dbReference type="NCBIfam" id="NF002149">
    <property type="entry name" value="PRK00982.1-3"/>
    <property type="match status" value="1"/>
</dbReference>
<dbReference type="NCBIfam" id="NF002150">
    <property type="entry name" value="PRK00982.1-4"/>
    <property type="match status" value="1"/>
</dbReference>
<dbReference type="NCBIfam" id="NF002151">
    <property type="entry name" value="PRK00982.1-5"/>
    <property type="match status" value="1"/>
</dbReference>
<dbReference type="PANTHER" id="PTHR20863">
    <property type="entry name" value="ACYL CARRIER PROTEIN"/>
    <property type="match status" value="1"/>
</dbReference>
<dbReference type="PANTHER" id="PTHR20863:SF76">
    <property type="entry name" value="CARRIER DOMAIN-CONTAINING PROTEIN"/>
    <property type="match status" value="1"/>
</dbReference>
<dbReference type="Pfam" id="PF00550">
    <property type="entry name" value="PP-binding"/>
    <property type="match status" value="1"/>
</dbReference>
<dbReference type="SUPFAM" id="SSF47336">
    <property type="entry name" value="ACP-like"/>
    <property type="match status" value="1"/>
</dbReference>
<dbReference type="PROSITE" id="PS50075">
    <property type="entry name" value="CARRIER"/>
    <property type="match status" value="1"/>
</dbReference>
<dbReference type="PROSITE" id="PS00012">
    <property type="entry name" value="PHOSPHOPANTETHEINE"/>
    <property type="match status" value="1"/>
</dbReference>
<reference key="1">
    <citation type="submission" date="2007-08" db="EMBL/GenBank/DDBJ databases">
        <authorList>
            <consortium name="The Vibrio harveyi Genome Sequencing Project"/>
            <person name="Bassler B."/>
            <person name="Clifton S.W."/>
            <person name="Fulton L."/>
            <person name="Delehaunty K."/>
            <person name="Fronick C."/>
            <person name="Harrison M."/>
            <person name="Markivic C."/>
            <person name="Fulton R."/>
            <person name="Tin-Wollam A.-M."/>
            <person name="Shah N."/>
            <person name="Pepin K."/>
            <person name="Nash W."/>
            <person name="Thiruvilangam P."/>
            <person name="Bhonagiri V."/>
            <person name="Waters C."/>
            <person name="Tu K.C."/>
            <person name="Irgon J."/>
            <person name="Wilson R.K."/>
        </authorList>
    </citation>
    <scope>NUCLEOTIDE SEQUENCE [LARGE SCALE GENOMIC DNA]</scope>
    <source>
        <strain>ATCC BAA-1116 / BB120</strain>
    </source>
</reference>
<gene>
    <name evidence="1" type="primary">acpP</name>
    <name type="ordered locus">VIBHAR_02907</name>
</gene>
<name>ACP_VIBC1</name>